<gene>
    <name evidence="1" type="primary">rpsK</name>
    <name type="ordered locus">CV_4162</name>
</gene>
<keyword id="KW-1185">Reference proteome</keyword>
<keyword id="KW-0687">Ribonucleoprotein</keyword>
<keyword id="KW-0689">Ribosomal protein</keyword>
<keyword id="KW-0694">RNA-binding</keyword>
<keyword id="KW-0699">rRNA-binding</keyword>
<proteinExistence type="inferred from homology"/>
<reference key="1">
    <citation type="journal article" date="2003" name="Proc. Natl. Acad. Sci. U.S.A.">
        <title>The complete genome sequence of Chromobacterium violaceum reveals remarkable and exploitable bacterial adaptability.</title>
        <authorList>
            <person name="Vasconcelos A.T.R."/>
            <person name="de Almeida D.F."/>
            <person name="Hungria M."/>
            <person name="Guimaraes C.T."/>
            <person name="Antonio R.V."/>
            <person name="Almeida F.C."/>
            <person name="de Almeida L.G.P."/>
            <person name="de Almeida R."/>
            <person name="Alves-Gomes J.A."/>
            <person name="Andrade E.M."/>
            <person name="Araripe J."/>
            <person name="de Araujo M.F.F."/>
            <person name="Astolfi-Filho S."/>
            <person name="Azevedo V."/>
            <person name="Baptista A.J."/>
            <person name="Bataus L.A.M."/>
            <person name="Batista J.S."/>
            <person name="Belo A."/>
            <person name="van den Berg C."/>
            <person name="Bogo M."/>
            <person name="Bonatto S."/>
            <person name="Bordignon J."/>
            <person name="Brigido M.M."/>
            <person name="Brito C.A."/>
            <person name="Brocchi M."/>
            <person name="Burity H.A."/>
            <person name="Camargo A.A."/>
            <person name="Cardoso D.D.P."/>
            <person name="Carneiro N.P."/>
            <person name="Carraro D.M."/>
            <person name="Carvalho C.M.B."/>
            <person name="Cascardo J.C.M."/>
            <person name="Cavada B.S."/>
            <person name="Chueire L.M.O."/>
            <person name="Creczynski-Pasa T.B."/>
            <person name="Cunha-Junior N.C."/>
            <person name="Fagundes N."/>
            <person name="Falcao C.L."/>
            <person name="Fantinatti F."/>
            <person name="Farias I.P."/>
            <person name="Felipe M.S.S."/>
            <person name="Ferrari L.P."/>
            <person name="Ferro J.A."/>
            <person name="Ferro M.I.T."/>
            <person name="Franco G.R."/>
            <person name="Freitas N.S.A."/>
            <person name="Furlan L.R."/>
            <person name="Gazzinelli R.T."/>
            <person name="Gomes E.A."/>
            <person name="Goncalves P.R."/>
            <person name="Grangeiro T.B."/>
            <person name="Grattapaglia D."/>
            <person name="Grisard E.C."/>
            <person name="Hanna E.S."/>
            <person name="Jardim S.N."/>
            <person name="Laurino J."/>
            <person name="Leoi L.C.T."/>
            <person name="Lima L.F.A."/>
            <person name="Loureiro M.F."/>
            <person name="Lyra M.C.C.P."/>
            <person name="Madeira H.M.F."/>
            <person name="Manfio G.P."/>
            <person name="Maranhao A.Q."/>
            <person name="Martins W.S."/>
            <person name="di Mauro S.M.Z."/>
            <person name="de Medeiros S.R.B."/>
            <person name="Meissner R.V."/>
            <person name="Moreira M.A.M."/>
            <person name="Nascimento F.F."/>
            <person name="Nicolas M.F."/>
            <person name="Oliveira J.G."/>
            <person name="Oliveira S.C."/>
            <person name="Paixao R.F.C."/>
            <person name="Parente J.A."/>
            <person name="Pedrosa F.O."/>
            <person name="Pena S.D.J."/>
            <person name="Pereira J.O."/>
            <person name="Pereira M."/>
            <person name="Pinto L.S.R.C."/>
            <person name="Pinto L.S."/>
            <person name="Porto J.I.R."/>
            <person name="Potrich D.P."/>
            <person name="Ramalho-Neto C.E."/>
            <person name="Reis A.M.M."/>
            <person name="Rigo L.U."/>
            <person name="Rondinelli E."/>
            <person name="Santos E.B.P."/>
            <person name="Santos F.R."/>
            <person name="Schneider M.P.C."/>
            <person name="Seuanez H.N."/>
            <person name="Silva A.M.R."/>
            <person name="da Silva A.L.C."/>
            <person name="Silva D.W."/>
            <person name="Silva R."/>
            <person name="Simoes I.C."/>
            <person name="Simon D."/>
            <person name="Soares C.M.A."/>
            <person name="Soares R.B.A."/>
            <person name="Souza E.M."/>
            <person name="Souza K.R.L."/>
            <person name="Souza R.C."/>
            <person name="Steffens M.B.R."/>
            <person name="Steindel M."/>
            <person name="Teixeira S.R."/>
            <person name="Urmenyi T."/>
            <person name="Vettore A."/>
            <person name="Wassem R."/>
            <person name="Zaha A."/>
            <person name="Simpson A.J.G."/>
        </authorList>
    </citation>
    <scope>NUCLEOTIDE SEQUENCE [LARGE SCALE GENOMIC DNA]</scope>
    <source>
        <strain>ATCC 12472 / DSM 30191 / JCM 1249 / CCUG 213 / NBRC 12614 / NCIMB 9131 / NCTC 9757 / MK</strain>
    </source>
</reference>
<feature type="chain" id="PRO_0000123133" description="Small ribosomal subunit protein uS11">
    <location>
        <begin position="1"/>
        <end position="131"/>
    </location>
</feature>
<organism>
    <name type="scientific">Chromobacterium violaceum (strain ATCC 12472 / DSM 30191 / JCM 1249 / CCUG 213 / NBRC 12614 / NCIMB 9131 / NCTC 9757 / MK)</name>
    <dbReference type="NCBI Taxonomy" id="243365"/>
    <lineage>
        <taxon>Bacteria</taxon>
        <taxon>Pseudomonadati</taxon>
        <taxon>Pseudomonadota</taxon>
        <taxon>Betaproteobacteria</taxon>
        <taxon>Neisseriales</taxon>
        <taxon>Chromobacteriaceae</taxon>
        <taxon>Chromobacterium</taxon>
    </lineage>
</organism>
<accession>Q7NQH5</accession>
<evidence type="ECO:0000255" key="1">
    <source>
        <dbReference type="HAMAP-Rule" id="MF_01310"/>
    </source>
</evidence>
<evidence type="ECO:0000305" key="2"/>
<protein>
    <recommendedName>
        <fullName evidence="1">Small ribosomal subunit protein uS11</fullName>
    </recommendedName>
    <alternativeName>
        <fullName evidence="2">30S ribosomal protein S11</fullName>
    </alternativeName>
</protein>
<sequence>MAKANTAVRVRKKVRKSVSEGIVHVHASFNNTIITITDRQGNALSWATSGGAGFKGSRKSTPFAAQVAAEHAGKVAQEYGVKNLEVRIKGPGPGRESAVRALNSLGFKITSISDVTPVPHNGCRPPKKRRI</sequence>
<dbReference type="EMBL" id="AE016825">
    <property type="protein sequence ID" value="AAQ61823.1"/>
    <property type="molecule type" value="Genomic_DNA"/>
</dbReference>
<dbReference type="RefSeq" id="WP_011137709.1">
    <property type="nucleotide sequence ID" value="NC_005085.1"/>
</dbReference>
<dbReference type="SMR" id="Q7NQH5"/>
<dbReference type="STRING" id="243365.CV_4162"/>
<dbReference type="GeneID" id="97477839"/>
<dbReference type="KEGG" id="cvi:CV_4162"/>
<dbReference type="eggNOG" id="COG0100">
    <property type="taxonomic scope" value="Bacteria"/>
</dbReference>
<dbReference type="HOGENOM" id="CLU_072439_5_0_4"/>
<dbReference type="OrthoDB" id="9806415at2"/>
<dbReference type="Proteomes" id="UP000001424">
    <property type="component" value="Chromosome"/>
</dbReference>
<dbReference type="GO" id="GO:1990904">
    <property type="term" value="C:ribonucleoprotein complex"/>
    <property type="evidence" value="ECO:0007669"/>
    <property type="project" value="UniProtKB-KW"/>
</dbReference>
<dbReference type="GO" id="GO:0005840">
    <property type="term" value="C:ribosome"/>
    <property type="evidence" value="ECO:0007669"/>
    <property type="project" value="UniProtKB-KW"/>
</dbReference>
<dbReference type="GO" id="GO:0019843">
    <property type="term" value="F:rRNA binding"/>
    <property type="evidence" value="ECO:0007669"/>
    <property type="project" value="UniProtKB-UniRule"/>
</dbReference>
<dbReference type="GO" id="GO:0003735">
    <property type="term" value="F:structural constituent of ribosome"/>
    <property type="evidence" value="ECO:0007669"/>
    <property type="project" value="InterPro"/>
</dbReference>
<dbReference type="GO" id="GO:0006412">
    <property type="term" value="P:translation"/>
    <property type="evidence" value="ECO:0007669"/>
    <property type="project" value="UniProtKB-UniRule"/>
</dbReference>
<dbReference type="FunFam" id="3.30.420.80:FF:000001">
    <property type="entry name" value="30S ribosomal protein S11"/>
    <property type="match status" value="1"/>
</dbReference>
<dbReference type="Gene3D" id="3.30.420.80">
    <property type="entry name" value="Ribosomal protein S11"/>
    <property type="match status" value="1"/>
</dbReference>
<dbReference type="HAMAP" id="MF_01310">
    <property type="entry name" value="Ribosomal_uS11"/>
    <property type="match status" value="1"/>
</dbReference>
<dbReference type="InterPro" id="IPR001971">
    <property type="entry name" value="Ribosomal_uS11"/>
</dbReference>
<dbReference type="InterPro" id="IPR019981">
    <property type="entry name" value="Ribosomal_uS11_bac-type"/>
</dbReference>
<dbReference type="InterPro" id="IPR018102">
    <property type="entry name" value="Ribosomal_uS11_CS"/>
</dbReference>
<dbReference type="InterPro" id="IPR036967">
    <property type="entry name" value="Ribosomal_uS11_sf"/>
</dbReference>
<dbReference type="NCBIfam" id="NF003698">
    <property type="entry name" value="PRK05309.1"/>
    <property type="match status" value="1"/>
</dbReference>
<dbReference type="NCBIfam" id="TIGR03632">
    <property type="entry name" value="uS11_bact"/>
    <property type="match status" value="1"/>
</dbReference>
<dbReference type="PANTHER" id="PTHR11759">
    <property type="entry name" value="40S RIBOSOMAL PROTEIN S14/30S RIBOSOMAL PROTEIN S11"/>
    <property type="match status" value="1"/>
</dbReference>
<dbReference type="Pfam" id="PF00411">
    <property type="entry name" value="Ribosomal_S11"/>
    <property type="match status" value="1"/>
</dbReference>
<dbReference type="PIRSF" id="PIRSF002131">
    <property type="entry name" value="Ribosomal_S11"/>
    <property type="match status" value="1"/>
</dbReference>
<dbReference type="SUPFAM" id="SSF53137">
    <property type="entry name" value="Translational machinery components"/>
    <property type="match status" value="1"/>
</dbReference>
<dbReference type="PROSITE" id="PS00054">
    <property type="entry name" value="RIBOSOMAL_S11"/>
    <property type="match status" value="1"/>
</dbReference>
<comment type="function">
    <text evidence="1">Located on the platform of the 30S subunit, it bridges several disparate RNA helices of the 16S rRNA. Forms part of the Shine-Dalgarno cleft in the 70S ribosome.</text>
</comment>
<comment type="subunit">
    <text evidence="1">Part of the 30S ribosomal subunit. Interacts with proteins S7 and S18. Binds to IF-3.</text>
</comment>
<comment type="similarity">
    <text evidence="1">Belongs to the universal ribosomal protein uS11 family.</text>
</comment>
<name>RS11_CHRVO</name>